<reference key="1">
    <citation type="journal article" date="2010" name="Genome Biol.">
        <title>Structure and dynamics of the pan-genome of Streptococcus pneumoniae and closely related species.</title>
        <authorList>
            <person name="Donati C."/>
            <person name="Hiller N.L."/>
            <person name="Tettelin H."/>
            <person name="Muzzi A."/>
            <person name="Croucher N.J."/>
            <person name="Angiuoli S.V."/>
            <person name="Oggioni M."/>
            <person name="Dunning Hotopp J.C."/>
            <person name="Hu F.Z."/>
            <person name="Riley D.R."/>
            <person name="Covacci A."/>
            <person name="Mitchell T.J."/>
            <person name="Bentley S.D."/>
            <person name="Kilian M."/>
            <person name="Ehrlich G.D."/>
            <person name="Rappuoli R."/>
            <person name="Moxon E.R."/>
            <person name="Masignani V."/>
        </authorList>
    </citation>
    <scope>NUCLEOTIDE SEQUENCE [LARGE SCALE GENOMIC DNA]</scope>
    <source>
        <strain>Hungary19A-6</strain>
    </source>
</reference>
<organism>
    <name type="scientific">Streptococcus pneumoniae (strain Hungary19A-6)</name>
    <dbReference type="NCBI Taxonomy" id="487214"/>
    <lineage>
        <taxon>Bacteria</taxon>
        <taxon>Bacillati</taxon>
        <taxon>Bacillota</taxon>
        <taxon>Bacilli</taxon>
        <taxon>Lactobacillales</taxon>
        <taxon>Streptococcaceae</taxon>
        <taxon>Streptococcus</taxon>
    </lineage>
</organism>
<accession>B1ICY3</accession>
<dbReference type="EC" id="1.18.1.2" evidence="1"/>
<dbReference type="EMBL" id="CP000936">
    <property type="protein sequence ID" value="ACA36036.1"/>
    <property type="molecule type" value="Genomic_DNA"/>
</dbReference>
<dbReference type="RefSeq" id="WP_000081002.1">
    <property type="nucleotide sequence ID" value="NC_010380.1"/>
</dbReference>
<dbReference type="SMR" id="B1ICY3"/>
<dbReference type="KEGG" id="spv:SPH_1677"/>
<dbReference type="HOGENOM" id="CLU_031864_5_5_9"/>
<dbReference type="Proteomes" id="UP000002163">
    <property type="component" value="Chromosome"/>
</dbReference>
<dbReference type="GO" id="GO:0004324">
    <property type="term" value="F:ferredoxin-NADP+ reductase activity"/>
    <property type="evidence" value="ECO:0007669"/>
    <property type="project" value="UniProtKB-UniRule"/>
</dbReference>
<dbReference type="GO" id="GO:0050660">
    <property type="term" value="F:flavin adenine dinucleotide binding"/>
    <property type="evidence" value="ECO:0007669"/>
    <property type="project" value="UniProtKB-UniRule"/>
</dbReference>
<dbReference type="GO" id="GO:0050661">
    <property type="term" value="F:NADP binding"/>
    <property type="evidence" value="ECO:0007669"/>
    <property type="project" value="UniProtKB-UniRule"/>
</dbReference>
<dbReference type="Gene3D" id="3.50.50.60">
    <property type="entry name" value="FAD/NAD(P)-binding domain"/>
    <property type="match status" value="2"/>
</dbReference>
<dbReference type="HAMAP" id="MF_01685">
    <property type="entry name" value="FENR2"/>
    <property type="match status" value="1"/>
</dbReference>
<dbReference type="InterPro" id="IPR036188">
    <property type="entry name" value="FAD/NAD-bd_sf"/>
</dbReference>
<dbReference type="InterPro" id="IPR023753">
    <property type="entry name" value="FAD/NAD-binding_dom"/>
</dbReference>
<dbReference type="InterPro" id="IPR022890">
    <property type="entry name" value="Fd--NADP_Rdtase_type_2"/>
</dbReference>
<dbReference type="InterPro" id="IPR050097">
    <property type="entry name" value="Ferredoxin-NADP_redctase_2"/>
</dbReference>
<dbReference type="PANTHER" id="PTHR48105">
    <property type="entry name" value="THIOREDOXIN REDUCTASE 1-RELATED-RELATED"/>
    <property type="match status" value="1"/>
</dbReference>
<dbReference type="Pfam" id="PF07992">
    <property type="entry name" value="Pyr_redox_2"/>
    <property type="match status" value="1"/>
</dbReference>
<dbReference type="PRINTS" id="PR00368">
    <property type="entry name" value="FADPNR"/>
</dbReference>
<dbReference type="PRINTS" id="PR00469">
    <property type="entry name" value="PNDRDTASEII"/>
</dbReference>
<dbReference type="SUPFAM" id="SSF51905">
    <property type="entry name" value="FAD/NAD(P)-binding domain"/>
    <property type="match status" value="1"/>
</dbReference>
<protein>
    <recommendedName>
        <fullName evidence="1">Ferredoxin--NADP reductase</fullName>
        <shortName evidence="1">FNR</shortName>
        <shortName evidence="1">Fd-NADP(+) reductase</shortName>
        <ecNumber evidence="1">1.18.1.2</ecNumber>
    </recommendedName>
</protein>
<proteinExistence type="inferred from homology"/>
<feature type="chain" id="PRO_0000364959" description="Ferredoxin--NADP reductase">
    <location>
        <begin position="1"/>
        <end position="322"/>
    </location>
</feature>
<feature type="binding site" evidence="1">
    <location>
        <position position="34"/>
    </location>
    <ligand>
        <name>FAD</name>
        <dbReference type="ChEBI" id="CHEBI:57692"/>
    </ligand>
</feature>
<feature type="binding site" evidence="1">
    <location>
        <position position="42"/>
    </location>
    <ligand>
        <name>FAD</name>
        <dbReference type="ChEBI" id="CHEBI:57692"/>
    </ligand>
</feature>
<feature type="binding site" evidence="1">
    <location>
        <position position="47"/>
    </location>
    <ligand>
        <name>FAD</name>
        <dbReference type="ChEBI" id="CHEBI:57692"/>
    </ligand>
</feature>
<feature type="binding site" evidence="1">
    <location>
        <position position="87"/>
    </location>
    <ligand>
        <name>FAD</name>
        <dbReference type="ChEBI" id="CHEBI:57692"/>
    </ligand>
</feature>
<feature type="binding site" evidence="1">
    <location>
        <position position="120"/>
    </location>
    <ligand>
        <name>FAD</name>
        <dbReference type="ChEBI" id="CHEBI:57692"/>
    </ligand>
</feature>
<feature type="binding site" evidence="1">
    <location>
        <position position="279"/>
    </location>
    <ligand>
        <name>FAD</name>
        <dbReference type="ChEBI" id="CHEBI:57692"/>
    </ligand>
</feature>
<feature type="binding site" evidence="1">
    <location>
        <position position="320"/>
    </location>
    <ligand>
        <name>FAD</name>
        <dbReference type="ChEBI" id="CHEBI:57692"/>
    </ligand>
</feature>
<sequence length="322" mass="35226">MSQLYDITIVGGGPVGLFAAFYAHLRQAKVQIIDSLPQLGGQPAILYPEKEILDVPGFPNLTGEELTNRLIEQLNGFDTPIHLNETVLEIDKQEEEFAITTSKGSHLTKTVIIAMGGGAFKPRPLELEGVEGYENIHYHVSNIQQYAGKKVTILGGGDSAVDWALAFEKIAPTTLVHRRDNFRALEHSVQALQESSVTIKTPFAPSQLLGNGKTLAKLEITKVKSDETETIDLDHLFVNYGFKSSVGNLKNWGLDLNRHKIIVNSKQESSQAGIYAIGDCCYYDGKIDLIATGLGEAPTAVNNAINYIDPEQKVQPKHSTSL</sequence>
<keyword id="KW-0274">FAD</keyword>
<keyword id="KW-0285">Flavoprotein</keyword>
<keyword id="KW-0521">NADP</keyword>
<keyword id="KW-0560">Oxidoreductase</keyword>
<evidence type="ECO:0000255" key="1">
    <source>
        <dbReference type="HAMAP-Rule" id="MF_01685"/>
    </source>
</evidence>
<comment type="catalytic activity">
    <reaction evidence="1">
        <text>2 reduced [2Fe-2S]-[ferredoxin] + NADP(+) + H(+) = 2 oxidized [2Fe-2S]-[ferredoxin] + NADPH</text>
        <dbReference type="Rhea" id="RHEA:20125"/>
        <dbReference type="Rhea" id="RHEA-COMP:10000"/>
        <dbReference type="Rhea" id="RHEA-COMP:10001"/>
        <dbReference type="ChEBI" id="CHEBI:15378"/>
        <dbReference type="ChEBI" id="CHEBI:33737"/>
        <dbReference type="ChEBI" id="CHEBI:33738"/>
        <dbReference type="ChEBI" id="CHEBI:57783"/>
        <dbReference type="ChEBI" id="CHEBI:58349"/>
        <dbReference type="EC" id="1.18.1.2"/>
    </reaction>
</comment>
<comment type="cofactor">
    <cofactor evidence="1">
        <name>FAD</name>
        <dbReference type="ChEBI" id="CHEBI:57692"/>
    </cofactor>
    <text evidence="1">Binds 1 FAD per subunit.</text>
</comment>
<comment type="subunit">
    <text evidence="1">Homodimer.</text>
</comment>
<comment type="similarity">
    <text evidence="1">Belongs to the ferredoxin--NADP reductase type 2 family.</text>
</comment>
<name>FENR_STRPI</name>
<gene>
    <name type="ordered locus">SPH_1677</name>
</gene>